<name>CAIT_ECO7I</name>
<feature type="chain" id="PRO_1000136230" description="L-carnitine/gamma-butyrobetaine antiporter">
    <location>
        <begin position="1"/>
        <end position="504"/>
    </location>
</feature>
<feature type="transmembrane region" description="Helical" evidence="1">
    <location>
        <begin position="10"/>
        <end position="30"/>
    </location>
</feature>
<feature type="transmembrane region" description="Helical" evidence="1">
    <location>
        <begin position="51"/>
        <end position="71"/>
    </location>
</feature>
<feature type="transmembrane region" description="Helical" evidence="1">
    <location>
        <begin position="92"/>
        <end position="112"/>
    </location>
</feature>
<feature type="transmembrane region" description="Helical" evidence="1">
    <location>
        <begin position="143"/>
        <end position="163"/>
    </location>
</feature>
<feature type="transmembrane region" description="Helical" evidence="1">
    <location>
        <begin position="195"/>
        <end position="215"/>
    </location>
</feature>
<feature type="transmembrane region" description="Helical" evidence="1">
    <location>
        <begin position="231"/>
        <end position="251"/>
    </location>
</feature>
<feature type="transmembrane region" description="Helical" evidence="1">
    <location>
        <begin position="263"/>
        <end position="283"/>
    </location>
</feature>
<feature type="transmembrane region" description="Helical" evidence="1">
    <location>
        <begin position="316"/>
        <end position="336"/>
    </location>
</feature>
<feature type="transmembrane region" description="Helical" evidence="1">
    <location>
        <begin position="347"/>
        <end position="367"/>
    </location>
</feature>
<feature type="transmembrane region" description="Helical" evidence="1">
    <location>
        <begin position="398"/>
        <end position="418"/>
    </location>
</feature>
<feature type="transmembrane region" description="Helical" evidence="1">
    <location>
        <begin position="446"/>
        <end position="466"/>
    </location>
</feature>
<feature type="transmembrane region" description="Helical" evidence="1">
    <location>
        <begin position="475"/>
        <end position="495"/>
    </location>
</feature>
<reference key="1">
    <citation type="journal article" date="2009" name="PLoS Genet.">
        <title>Organised genome dynamics in the Escherichia coli species results in highly diverse adaptive paths.</title>
        <authorList>
            <person name="Touchon M."/>
            <person name="Hoede C."/>
            <person name="Tenaillon O."/>
            <person name="Barbe V."/>
            <person name="Baeriswyl S."/>
            <person name="Bidet P."/>
            <person name="Bingen E."/>
            <person name="Bonacorsi S."/>
            <person name="Bouchier C."/>
            <person name="Bouvet O."/>
            <person name="Calteau A."/>
            <person name="Chiapello H."/>
            <person name="Clermont O."/>
            <person name="Cruveiller S."/>
            <person name="Danchin A."/>
            <person name="Diard M."/>
            <person name="Dossat C."/>
            <person name="Karoui M.E."/>
            <person name="Frapy E."/>
            <person name="Garry L."/>
            <person name="Ghigo J.M."/>
            <person name="Gilles A.M."/>
            <person name="Johnson J."/>
            <person name="Le Bouguenec C."/>
            <person name="Lescat M."/>
            <person name="Mangenot S."/>
            <person name="Martinez-Jehanne V."/>
            <person name="Matic I."/>
            <person name="Nassif X."/>
            <person name="Oztas S."/>
            <person name="Petit M.A."/>
            <person name="Pichon C."/>
            <person name="Rouy Z."/>
            <person name="Ruf C.S."/>
            <person name="Schneider D."/>
            <person name="Tourret J."/>
            <person name="Vacherie B."/>
            <person name="Vallenet D."/>
            <person name="Medigue C."/>
            <person name="Rocha E.P.C."/>
            <person name="Denamur E."/>
        </authorList>
    </citation>
    <scope>NUCLEOTIDE SEQUENCE [LARGE SCALE GENOMIC DNA]</scope>
    <source>
        <strain>IAI39 / ExPEC</strain>
    </source>
</reference>
<dbReference type="EMBL" id="CU928164">
    <property type="protein sequence ID" value="CAR16182.1"/>
    <property type="molecule type" value="Genomic_DNA"/>
</dbReference>
<dbReference type="RefSeq" id="WP_000787109.1">
    <property type="nucleotide sequence ID" value="NC_011750.1"/>
</dbReference>
<dbReference type="RefSeq" id="YP_002406089.1">
    <property type="nucleotide sequence ID" value="NC_011750.1"/>
</dbReference>
<dbReference type="SMR" id="B7NHE4"/>
<dbReference type="STRING" id="585057.ECIAI39_0041"/>
<dbReference type="KEGG" id="ect:ECIAI39_0041"/>
<dbReference type="PATRIC" id="fig|585057.6.peg.43"/>
<dbReference type="HOGENOM" id="CLU_010118_6_0_6"/>
<dbReference type="UniPathway" id="UPA00117"/>
<dbReference type="Proteomes" id="UP000000749">
    <property type="component" value="Chromosome"/>
</dbReference>
<dbReference type="GO" id="GO:0005886">
    <property type="term" value="C:plasma membrane"/>
    <property type="evidence" value="ECO:0007669"/>
    <property type="project" value="UniProtKB-SubCell"/>
</dbReference>
<dbReference type="GO" id="GO:0044667">
    <property type="term" value="F:(R)-carnitine:4-(trimethylammonio)butanoate antiporter activity"/>
    <property type="evidence" value="ECO:0007669"/>
    <property type="project" value="UniProtKB-UniRule"/>
</dbReference>
<dbReference type="GO" id="GO:1900751">
    <property type="term" value="P:4-(trimethylammonio)butanoate transport"/>
    <property type="evidence" value="ECO:0007669"/>
    <property type="project" value="InterPro"/>
</dbReference>
<dbReference type="GO" id="GO:0009437">
    <property type="term" value="P:carnitine metabolic process"/>
    <property type="evidence" value="ECO:0007669"/>
    <property type="project" value="UniProtKB-UniRule"/>
</dbReference>
<dbReference type="HAMAP" id="MF_01049">
    <property type="entry name" value="CaiT"/>
    <property type="match status" value="1"/>
</dbReference>
<dbReference type="InterPro" id="IPR018093">
    <property type="entry name" value="BCCT_CS"/>
</dbReference>
<dbReference type="InterPro" id="IPR000060">
    <property type="entry name" value="BCCT_transptr"/>
</dbReference>
<dbReference type="InterPro" id="IPR023449">
    <property type="entry name" value="BCCT_transptr_CaiT"/>
</dbReference>
<dbReference type="NCBIfam" id="TIGR00842">
    <property type="entry name" value="bcct"/>
    <property type="match status" value="1"/>
</dbReference>
<dbReference type="NCBIfam" id="NF002887">
    <property type="entry name" value="PRK03356.1"/>
    <property type="match status" value="1"/>
</dbReference>
<dbReference type="PANTHER" id="PTHR30047">
    <property type="entry name" value="HIGH-AFFINITY CHOLINE TRANSPORT PROTEIN-RELATED"/>
    <property type="match status" value="1"/>
</dbReference>
<dbReference type="PANTHER" id="PTHR30047:SF11">
    <property type="entry name" value="L-CARNITINE_GAMMA-BUTYROBETAINE ANTIPORTER"/>
    <property type="match status" value="1"/>
</dbReference>
<dbReference type="Pfam" id="PF02028">
    <property type="entry name" value="BCCT"/>
    <property type="match status" value="1"/>
</dbReference>
<dbReference type="PROSITE" id="PS01303">
    <property type="entry name" value="BCCT"/>
    <property type="match status" value="1"/>
</dbReference>
<organism>
    <name type="scientific">Escherichia coli O7:K1 (strain IAI39 / ExPEC)</name>
    <dbReference type="NCBI Taxonomy" id="585057"/>
    <lineage>
        <taxon>Bacteria</taxon>
        <taxon>Pseudomonadati</taxon>
        <taxon>Pseudomonadota</taxon>
        <taxon>Gammaproteobacteria</taxon>
        <taxon>Enterobacterales</taxon>
        <taxon>Enterobacteriaceae</taxon>
        <taxon>Escherichia</taxon>
    </lineage>
</organism>
<sequence>MKNEKRKTGIEPKVFFPPLIIVGILCWLTVRDLDAANVVINAVFSYVTNVWGWAFEWYMVVMLFGWFWLVFGPYAKKRLGNEPPEFSTASWIFMMFASCTSAAVLFWGSIEIYYYISTPPFGLEPNSTGAKELGLAYSLFHWGPLPWATYSFLSVAFAYFFFVRKMEVIRPSSTLVPLVGEKHAKGLFGTIVDNFYLVALIFAMGTSLGLATPLVTECMQWLFGIPHTLQLDAIIITCWIILNAICVACGLQKGVRIASDVRSYLSFLMLGWVFIVSGASFIMNYFTDSVGMLLMYLPRMLFYTDPIAKGGFPQGWTVFYWAWWVIYAIQMSIFLARISRGRTVRELCFGMVLGLTASTWILWTVLGSNTLLLMDKNIINIPNLIEQYGVARAIIETWAALPLSTATMWGFFILCFIATVTLVNACSYTLAMSTCREVRDGEEPPLLVRIGWSILVGIIGIVLLALGGLKPIQTAIIAGGCPLFFVNIMVTLSFIKDAKQNWKD</sequence>
<protein>
    <recommendedName>
        <fullName evidence="1">L-carnitine/gamma-butyrobetaine antiporter</fullName>
    </recommendedName>
</protein>
<comment type="function">
    <text evidence="1">Catalyzes the exchange of L-carnitine for gamma-butyrobetaine.</text>
</comment>
<comment type="catalytic activity">
    <reaction evidence="1">
        <text>4-(trimethylamino)butanoate(in) + (R)-carnitine(out) = 4-(trimethylamino)butanoate(out) + (R)-carnitine(in)</text>
        <dbReference type="Rhea" id="RHEA:29427"/>
        <dbReference type="ChEBI" id="CHEBI:16244"/>
        <dbReference type="ChEBI" id="CHEBI:16347"/>
    </reaction>
</comment>
<comment type="pathway">
    <text evidence="1">Amine and polyamine metabolism; carnitine metabolism.</text>
</comment>
<comment type="subunit">
    <text evidence="1">Homotrimer.</text>
</comment>
<comment type="subcellular location">
    <subcellularLocation>
        <location evidence="1">Cell inner membrane</location>
        <topology evidence="1">Multi-pass membrane protein</topology>
    </subcellularLocation>
</comment>
<comment type="similarity">
    <text evidence="1">Belongs to the BCCT transporter (TC 2.A.15) family. CaiT subfamily.</text>
</comment>
<proteinExistence type="inferred from homology"/>
<evidence type="ECO:0000255" key="1">
    <source>
        <dbReference type="HAMAP-Rule" id="MF_01049"/>
    </source>
</evidence>
<gene>
    <name evidence="1" type="primary">caiT</name>
    <name type="ordered locus">ECIAI39_0041</name>
</gene>
<keyword id="KW-0050">Antiport</keyword>
<keyword id="KW-0997">Cell inner membrane</keyword>
<keyword id="KW-1003">Cell membrane</keyword>
<keyword id="KW-0472">Membrane</keyword>
<keyword id="KW-0812">Transmembrane</keyword>
<keyword id="KW-1133">Transmembrane helix</keyword>
<keyword id="KW-0813">Transport</keyword>
<accession>B7NHE4</accession>